<comment type="function">
    <text evidence="1">Potential calcium sensor.</text>
</comment>
<comment type="caution">
    <text evidence="5">Although assigned as a calmodulin family member by PubMed:17263873, it only contains EF-hand domains.</text>
</comment>
<gene>
    <name type="primary">CML20</name>
    <name type="ordered locus">Os02g0733500</name>
    <name type="ordered locus">LOC_Os02g50060</name>
    <name type="ORF">OsJ_008004</name>
    <name type="ORF">P0643A10.34</name>
</gene>
<keyword id="KW-0106">Calcium</keyword>
<keyword id="KW-0449">Lipoprotein</keyword>
<keyword id="KW-0479">Metal-binding</keyword>
<keyword id="KW-0519">Myristate</keyword>
<keyword id="KW-1185">Reference proteome</keyword>
<keyword id="KW-0677">Repeat</keyword>
<sequence length="174" mass="18760">MGLVVSAAASCGRLRRSRSRSPPPAVLDPSQSPLSLEREAEPELIRVFRCFDTDGDGLISAAEMREFYGCSVDEAEEMVAAADRDGDGFVSIEELRAVMEGGGLDALRAAFDEYDEDGNGVITAEELRRALRRLNLDGMDLTAEQCAEIVAAVDSDGDGVISFDEFKAMMSKQA</sequence>
<dbReference type="EMBL" id="AP005319">
    <property type="protein sequence ID" value="BAD16149.1"/>
    <property type="molecule type" value="Genomic_DNA"/>
</dbReference>
<dbReference type="EMBL" id="AP008208">
    <property type="protein sequence ID" value="BAF09949.1"/>
    <property type="molecule type" value="Genomic_DNA"/>
</dbReference>
<dbReference type="EMBL" id="AP014958">
    <property type="protein sequence ID" value="BAS80779.1"/>
    <property type="molecule type" value="Genomic_DNA"/>
</dbReference>
<dbReference type="EMBL" id="CM000139">
    <property type="protein sequence ID" value="EAZ24521.1"/>
    <property type="molecule type" value="Genomic_DNA"/>
</dbReference>
<dbReference type="EMBL" id="AK108506">
    <property type="protein sequence ID" value="BAG98423.1"/>
    <property type="molecule type" value="mRNA"/>
</dbReference>
<dbReference type="RefSeq" id="XP_015624214.1">
    <property type="nucleotide sequence ID" value="XM_015768728.1"/>
</dbReference>
<dbReference type="SMR" id="Q6Z2J1"/>
<dbReference type="STRING" id="39947.Q6Z2J1"/>
<dbReference type="PaxDb" id="39947-Q6Z2J1"/>
<dbReference type="EnsemblPlants" id="Os02t0733500-01">
    <property type="protein sequence ID" value="Os02t0733500-01"/>
    <property type="gene ID" value="Os02g0733500"/>
</dbReference>
<dbReference type="Gramene" id="Os02t0733500-01">
    <property type="protein sequence ID" value="Os02t0733500-01"/>
    <property type="gene ID" value="Os02g0733500"/>
</dbReference>
<dbReference type="KEGG" id="dosa:Os02g0733500"/>
<dbReference type="eggNOG" id="KOG0027">
    <property type="taxonomic scope" value="Eukaryota"/>
</dbReference>
<dbReference type="HOGENOM" id="CLU_061288_20_4_1"/>
<dbReference type="InParanoid" id="Q6Z2J1"/>
<dbReference type="OMA" id="SYWKREV"/>
<dbReference type="OrthoDB" id="26525at2759"/>
<dbReference type="Proteomes" id="UP000000763">
    <property type="component" value="Chromosome 2"/>
</dbReference>
<dbReference type="Proteomes" id="UP000007752">
    <property type="component" value="Chromosome 2"/>
</dbReference>
<dbReference type="Proteomes" id="UP000059680">
    <property type="component" value="Chromosome 2"/>
</dbReference>
<dbReference type="GO" id="GO:0005509">
    <property type="term" value="F:calcium ion binding"/>
    <property type="evidence" value="ECO:0007669"/>
    <property type="project" value="InterPro"/>
</dbReference>
<dbReference type="CDD" id="cd00051">
    <property type="entry name" value="EFh"/>
    <property type="match status" value="2"/>
</dbReference>
<dbReference type="FunFam" id="1.10.238.10:FF:000421">
    <property type="entry name" value="Polcalcin Jun o 2"/>
    <property type="match status" value="1"/>
</dbReference>
<dbReference type="FunFam" id="1.10.238.10:FF:000423">
    <property type="entry name" value="Polcalcin Jun o 2"/>
    <property type="match status" value="1"/>
</dbReference>
<dbReference type="Gene3D" id="1.10.238.10">
    <property type="entry name" value="EF-hand"/>
    <property type="match status" value="2"/>
</dbReference>
<dbReference type="InterPro" id="IPR011992">
    <property type="entry name" value="EF-hand-dom_pair"/>
</dbReference>
<dbReference type="InterPro" id="IPR018247">
    <property type="entry name" value="EF_Hand_1_Ca_BS"/>
</dbReference>
<dbReference type="InterPro" id="IPR002048">
    <property type="entry name" value="EF_hand_dom"/>
</dbReference>
<dbReference type="InterPro" id="IPR039647">
    <property type="entry name" value="EF_hand_pair_protein_CML-like"/>
</dbReference>
<dbReference type="PANTHER" id="PTHR10891">
    <property type="entry name" value="EF-HAND CALCIUM-BINDING DOMAIN CONTAINING PROTEIN"/>
    <property type="match status" value="1"/>
</dbReference>
<dbReference type="Pfam" id="PF00036">
    <property type="entry name" value="EF-hand_1"/>
    <property type="match status" value="1"/>
</dbReference>
<dbReference type="Pfam" id="PF13202">
    <property type="entry name" value="EF-hand_5"/>
    <property type="match status" value="1"/>
</dbReference>
<dbReference type="Pfam" id="PF13499">
    <property type="entry name" value="EF-hand_7"/>
    <property type="match status" value="1"/>
</dbReference>
<dbReference type="PRINTS" id="PR01697">
    <property type="entry name" value="PARVALBUMIN"/>
</dbReference>
<dbReference type="SMART" id="SM00054">
    <property type="entry name" value="EFh"/>
    <property type="match status" value="4"/>
</dbReference>
<dbReference type="SUPFAM" id="SSF47473">
    <property type="entry name" value="EF-hand"/>
    <property type="match status" value="1"/>
</dbReference>
<dbReference type="PROSITE" id="PS00018">
    <property type="entry name" value="EF_HAND_1"/>
    <property type="match status" value="4"/>
</dbReference>
<dbReference type="PROSITE" id="PS50222">
    <property type="entry name" value="EF_HAND_2"/>
    <property type="match status" value="4"/>
</dbReference>
<evidence type="ECO:0000250" key="1"/>
<evidence type="ECO:0000255" key="2"/>
<evidence type="ECO:0000255" key="3">
    <source>
        <dbReference type="PROSITE-ProRule" id="PRU00448"/>
    </source>
</evidence>
<evidence type="ECO:0000256" key="4">
    <source>
        <dbReference type="SAM" id="MobiDB-lite"/>
    </source>
</evidence>
<evidence type="ECO:0000305" key="5"/>
<reference key="1">
    <citation type="journal article" date="2005" name="Nature">
        <title>The map-based sequence of the rice genome.</title>
        <authorList>
            <consortium name="International rice genome sequencing project (IRGSP)"/>
        </authorList>
    </citation>
    <scope>NUCLEOTIDE SEQUENCE [LARGE SCALE GENOMIC DNA]</scope>
    <source>
        <strain>cv. Nipponbare</strain>
    </source>
</reference>
<reference key="2">
    <citation type="journal article" date="2008" name="Nucleic Acids Res.">
        <title>The rice annotation project database (RAP-DB): 2008 update.</title>
        <authorList>
            <consortium name="The rice annotation project (RAP)"/>
        </authorList>
    </citation>
    <scope>GENOME REANNOTATION</scope>
    <source>
        <strain>cv. Nipponbare</strain>
    </source>
</reference>
<reference key="3">
    <citation type="journal article" date="2013" name="Rice">
        <title>Improvement of the Oryza sativa Nipponbare reference genome using next generation sequence and optical map data.</title>
        <authorList>
            <person name="Kawahara Y."/>
            <person name="de la Bastide M."/>
            <person name="Hamilton J.P."/>
            <person name="Kanamori H."/>
            <person name="McCombie W.R."/>
            <person name="Ouyang S."/>
            <person name="Schwartz D.C."/>
            <person name="Tanaka T."/>
            <person name="Wu J."/>
            <person name="Zhou S."/>
            <person name="Childs K.L."/>
            <person name="Davidson R.M."/>
            <person name="Lin H."/>
            <person name="Quesada-Ocampo L."/>
            <person name="Vaillancourt B."/>
            <person name="Sakai H."/>
            <person name="Lee S.S."/>
            <person name="Kim J."/>
            <person name="Numa H."/>
            <person name="Itoh T."/>
            <person name="Buell C.R."/>
            <person name="Matsumoto T."/>
        </authorList>
    </citation>
    <scope>GENOME REANNOTATION</scope>
    <source>
        <strain>cv. Nipponbare</strain>
    </source>
</reference>
<reference key="4">
    <citation type="journal article" date="2005" name="PLoS Biol.">
        <title>The genomes of Oryza sativa: a history of duplications.</title>
        <authorList>
            <person name="Yu J."/>
            <person name="Wang J."/>
            <person name="Lin W."/>
            <person name="Li S."/>
            <person name="Li H."/>
            <person name="Zhou J."/>
            <person name="Ni P."/>
            <person name="Dong W."/>
            <person name="Hu S."/>
            <person name="Zeng C."/>
            <person name="Zhang J."/>
            <person name="Zhang Y."/>
            <person name="Li R."/>
            <person name="Xu Z."/>
            <person name="Li S."/>
            <person name="Li X."/>
            <person name="Zheng H."/>
            <person name="Cong L."/>
            <person name="Lin L."/>
            <person name="Yin J."/>
            <person name="Geng J."/>
            <person name="Li G."/>
            <person name="Shi J."/>
            <person name="Liu J."/>
            <person name="Lv H."/>
            <person name="Li J."/>
            <person name="Wang J."/>
            <person name="Deng Y."/>
            <person name="Ran L."/>
            <person name="Shi X."/>
            <person name="Wang X."/>
            <person name="Wu Q."/>
            <person name="Li C."/>
            <person name="Ren X."/>
            <person name="Wang J."/>
            <person name="Wang X."/>
            <person name="Li D."/>
            <person name="Liu D."/>
            <person name="Zhang X."/>
            <person name="Ji Z."/>
            <person name="Zhao W."/>
            <person name="Sun Y."/>
            <person name="Zhang Z."/>
            <person name="Bao J."/>
            <person name="Han Y."/>
            <person name="Dong L."/>
            <person name="Ji J."/>
            <person name="Chen P."/>
            <person name="Wu S."/>
            <person name="Liu J."/>
            <person name="Xiao Y."/>
            <person name="Bu D."/>
            <person name="Tan J."/>
            <person name="Yang L."/>
            <person name="Ye C."/>
            <person name="Zhang J."/>
            <person name="Xu J."/>
            <person name="Zhou Y."/>
            <person name="Yu Y."/>
            <person name="Zhang B."/>
            <person name="Zhuang S."/>
            <person name="Wei H."/>
            <person name="Liu B."/>
            <person name="Lei M."/>
            <person name="Yu H."/>
            <person name="Li Y."/>
            <person name="Xu H."/>
            <person name="Wei S."/>
            <person name="He X."/>
            <person name="Fang L."/>
            <person name="Zhang Z."/>
            <person name="Zhang Y."/>
            <person name="Huang X."/>
            <person name="Su Z."/>
            <person name="Tong W."/>
            <person name="Li J."/>
            <person name="Tong Z."/>
            <person name="Li S."/>
            <person name="Ye J."/>
            <person name="Wang L."/>
            <person name="Fang L."/>
            <person name="Lei T."/>
            <person name="Chen C.-S."/>
            <person name="Chen H.-C."/>
            <person name="Xu Z."/>
            <person name="Li H."/>
            <person name="Huang H."/>
            <person name="Zhang F."/>
            <person name="Xu H."/>
            <person name="Li N."/>
            <person name="Zhao C."/>
            <person name="Li S."/>
            <person name="Dong L."/>
            <person name="Huang Y."/>
            <person name="Li L."/>
            <person name="Xi Y."/>
            <person name="Qi Q."/>
            <person name="Li W."/>
            <person name="Zhang B."/>
            <person name="Hu W."/>
            <person name="Zhang Y."/>
            <person name="Tian X."/>
            <person name="Jiao Y."/>
            <person name="Liang X."/>
            <person name="Jin J."/>
            <person name="Gao L."/>
            <person name="Zheng W."/>
            <person name="Hao B."/>
            <person name="Liu S.-M."/>
            <person name="Wang W."/>
            <person name="Yuan L."/>
            <person name="Cao M."/>
            <person name="McDermott J."/>
            <person name="Samudrala R."/>
            <person name="Wang J."/>
            <person name="Wong G.K.-S."/>
            <person name="Yang H."/>
        </authorList>
    </citation>
    <scope>NUCLEOTIDE SEQUENCE [LARGE SCALE GENOMIC DNA]</scope>
    <source>
        <strain>cv. Nipponbare</strain>
    </source>
</reference>
<reference key="5">
    <citation type="journal article" date="2003" name="Science">
        <title>Collection, mapping, and annotation of over 28,000 cDNA clones from japonica rice.</title>
        <authorList>
            <consortium name="The rice full-length cDNA consortium"/>
        </authorList>
    </citation>
    <scope>NUCLEOTIDE SEQUENCE [LARGE SCALE MRNA]</scope>
    <source>
        <strain>cv. Nipponbare</strain>
    </source>
</reference>
<reference key="6">
    <citation type="journal article" date="2007" name="BMC Plant Biol.">
        <title>Genome-wide identification and analyses of the rice calmodulin and related potential calcium sensor proteins.</title>
        <authorList>
            <person name="Boonburapong B."/>
            <person name="Buaboocha T."/>
        </authorList>
    </citation>
    <scope>GENE FAMILY</scope>
    <scope>NOMENCLATURE</scope>
</reference>
<organism>
    <name type="scientific">Oryza sativa subsp. japonica</name>
    <name type="common">Rice</name>
    <dbReference type="NCBI Taxonomy" id="39947"/>
    <lineage>
        <taxon>Eukaryota</taxon>
        <taxon>Viridiplantae</taxon>
        <taxon>Streptophyta</taxon>
        <taxon>Embryophyta</taxon>
        <taxon>Tracheophyta</taxon>
        <taxon>Spermatophyta</taxon>
        <taxon>Magnoliopsida</taxon>
        <taxon>Liliopsida</taxon>
        <taxon>Poales</taxon>
        <taxon>Poaceae</taxon>
        <taxon>BOP clade</taxon>
        <taxon>Oryzoideae</taxon>
        <taxon>Oryzeae</taxon>
        <taxon>Oryzinae</taxon>
        <taxon>Oryza</taxon>
        <taxon>Oryza sativa</taxon>
    </lineage>
</organism>
<name>CML20_ORYSJ</name>
<protein>
    <recommendedName>
        <fullName>Probable calcium-binding protein CML20</fullName>
    </recommendedName>
    <alternativeName>
        <fullName>Calmodulin-like protein 20</fullName>
    </alternativeName>
</protein>
<feature type="initiator methionine" description="Removed" evidence="2">
    <location>
        <position position="1"/>
    </location>
</feature>
<feature type="chain" id="PRO_0000338435" description="Probable calcium-binding protein CML20">
    <location>
        <begin position="2"/>
        <end position="174"/>
    </location>
</feature>
<feature type="domain" description="EF-hand 1" evidence="3">
    <location>
        <begin position="39"/>
        <end position="74"/>
    </location>
</feature>
<feature type="domain" description="EF-hand 2" evidence="3">
    <location>
        <begin position="75"/>
        <end position="100"/>
    </location>
</feature>
<feature type="domain" description="EF-hand 3" evidence="3">
    <location>
        <begin position="102"/>
        <end position="137"/>
    </location>
</feature>
<feature type="domain" description="EF-hand 4" evidence="3">
    <location>
        <begin position="141"/>
        <end position="174"/>
    </location>
</feature>
<feature type="region of interest" description="Disordered" evidence="4">
    <location>
        <begin position="14"/>
        <end position="35"/>
    </location>
</feature>
<feature type="binding site" evidence="3">
    <location>
        <position position="52"/>
    </location>
    <ligand>
        <name>Ca(2+)</name>
        <dbReference type="ChEBI" id="CHEBI:29108"/>
        <label>1</label>
    </ligand>
</feature>
<feature type="binding site" evidence="3">
    <location>
        <position position="54"/>
    </location>
    <ligand>
        <name>Ca(2+)</name>
        <dbReference type="ChEBI" id="CHEBI:29108"/>
        <label>1</label>
    </ligand>
</feature>
<feature type="binding site" evidence="3">
    <location>
        <position position="56"/>
    </location>
    <ligand>
        <name>Ca(2+)</name>
        <dbReference type="ChEBI" id="CHEBI:29108"/>
        <label>1</label>
    </ligand>
</feature>
<feature type="binding site" evidence="3">
    <location>
        <position position="63"/>
    </location>
    <ligand>
        <name>Ca(2+)</name>
        <dbReference type="ChEBI" id="CHEBI:29108"/>
        <label>1</label>
    </ligand>
</feature>
<feature type="binding site" evidence="3">
    <location>
        <position position="83"/>
    </location>
    <ligand>
        <name>Ca(2+)</name>
        <dbReference type="ChEBI" id="CHEBI:29108"/>
        <label>2</label>
    </ligand>
</feature>
<feature type="binding site" evidence="3">
    <location>
        <position position="85"/>
    </location>
    <ligand>
        <name>Ca(2+)</name>
        <dbReference type="ChEBI" id="CHEBI:29108"/>
        <label>2</label>
    </ligand>
</feature>
<feature type="binding site" evidence="3">
    <location>
        <position position="87"/>
    </location>
    <ligand>
        <name>Ca(2+)</name>
        <dbReference type="ChEBI" id="CHEBI:29108"/>
        <label>2</label>
    </ligand>
</feature>
<feature type="binding site" evidence="3">
    <location>
        <position position="94"/>
    </location>
    <ligand>
        <name>Ca(2+)</name>
        <dbReference type="ChEBI" id="CHEBI:29108"/>
        <label>2</label>
    </ligand>
</feature>
<feature type="binding site" evidence="3">
    <location>
        <position position="115"/>
    </location>
    <ligand>
        <name>Ca(2+)</name>
        <dbReference type="ChEBI" id="CHEBI:29108"/>
        <label>3</label>
    </ligand>
</feature>
<feature type="binding site" evidence="3">
    <location>
        <position position="117"/>
    </location>
    <ligand>
        <name>Ca(2+)</name>
        <dbReference type="ChEBI" id="CHEBI:29108"/>
        <label>3</label>
    </ligand>
</feature>
<feature type="binding site" evidence="3">
    <location>
        <position position="119"/>
    </location>
    <ligand>
        <name>Ca(2+)</name>
        <dbReference type="ChEBI" id="CHEBI:29108"/>
        <label>3</label>
    </ligand>
</feature>
<feature type="binding site" evidence="3">
    <location>
        <position position="126"/>
    </location>
    <ligand>
        <name>Ca(2+)</name>
        <dbReference type="ChEBI" id="CHEBI:29108"/>
        <label>3</label>
    </ligand>
</feature>
<feature type="binding site" evidence="3">
    <location>
        <position position="154"/>
    </location>
    <ligand>
        <name>Ca(2+)</name>
        <dbReference type="ChEBI" id="CHEBI:29108"/>
        <label>4</label>
    </ligand>
</feature>
<feature type="binding site" evidence="3">
    <location>
        <position position="156"/>
    </location>
    <ligand>
        <name>Ca(2+)</name>
        <dbReference type="ChEBI" id="CHEBI:29108"/>
        <label>4</label>
    </ligand>
</feature>
<feature type="binding site" evidence="3">
    <location>
        <position position="158"/>
    </location>
    <ligand>
        <name>Ca(2+)</name>
        <dbReference type="ChEBI" id="CHEBI:29108"/>
        <label>4</label>
    </ligand>
</feature>
<feature type="binding site" evidence="3">
    <location>
        <position position="165"/>
    </location>
    <ligand>
        <name>Ca(2+)</name>
        <dbReference type="ChEBI" id="CHEBI:29108"/>
        <label>4</label>
    </ligand>
</feature>
<feature type="lipid moiety-binding region" description="N-myristoyl glycine" evidence="2">
    <location>
        <position position="2"/>
    </location>
</feature>
<proteinExistence type="evidence at transcript level"/>
<accession>Q6Z2J1</accession>
<accession>B7F1C6</accession>